<dbReference type="EMBL" id="CP000847">
    <property type="protein sequence ID" value="ABV74525.1"/>
    <property type="molecule type" value="Genomic_DNA"/>
</dbReference>
<dbReference type="RefSeq" id="WP_012013395.1">
    <property type="nucleotide sequence ID" value="NC_009881.1"/>
</dbReference>
<dbReference type="SMR" id="A8GMA0"/>
<dbReference type="STRING" id="293614.A1C_00975"/>
<dbReference type="KEGG" id="rak:A1C_00975"/>
<dbReference type="eggNOG" id="COG0480">
    <property type="taxonomic scope" value="Bacteria"/>
</dbReference>
<dbReference type="HOGENOM" id="CLU_002794_4_1_5"/>
<dbReference type="Proteomes" id="UP000006830">
    <property type="component" value="Chromosome"/>
</dbReference>
<dbReference type="GO" id="GO:0005737">
    <property type="term" value="C:cytoplasm"/>
    <property type="evidence" value="ECO:0007669"/>
    <property type="project" value="UniProtKB-SubCell"/>
</dbReference>
<dbReference type="GO" id="GO:0005525">
    <property type="term" value="F:GTP binding"/>
    <property type="evidence" value="ECO:0007669"/>
    <property type="project" value="UniProtKB-UniRule"/>
</dbReference>
<dbReference type="GO" id="GO:0003924">
    <property type="term" value="F:GTPase activity"/>
    <property type="evidence" value="ECO:0007669"/>
    <property type="project" value="InterPro"/>
</dbReference>
<dbReference type="GO" id="GO:0003746">
    <property type="term" value="F:translation elongation factor activity"/>
    <property type="evidence" value="ECO:0007669"/>
    <property type="project" value="UniProtKB-UniRule"/>
</dbReference>
<dbReference type="GO" id="GO:0032790">
    <property type="term" value="P:ribosome disassembly"/>
    <property type="evidence" value="ECO:0007669"/>
    <property type="project" value="TreeGrafter"/>
</dbReference>
<dbReference type="CDD" id="cd01886">
    <property type="entry name" value="EF-G"/>
    <property type="match status" value="1"/>
</dbReference>
<dbReference type="CDD" id="cd16262">
    <property type="entry name" value="EFG_III"/>
    <property type="match status" value="1"/>
</dbReference>
<dbReference type="CDD" id="cd01434">
    <property type="entry name" value="EFG_mtEFG1_IV"/>
    <property type="match status" value="1"/>
</dbReference>
<dbReference type="CDD" id="cd03713">
    <property type="entry name" value="EFG_mtEFG_C"/>
    <property type="match status" value="1"/>
</dbReference>
<dbReference type="CDD" id="cd04088">
    <property type="entry name" value="EFG_mtEFG_II"/>
    <property type="match status" value="1"/>
</dbReference>
<dbReference type="FunFam" id="2.40.30.10:FF:000006">
    <property type="entry name" value="Elongation factor G"/>
    <property type="match status" value="1"/>
</dbReference>
<dbReference type="FunFam" id="3.30.230.10:FF:000003">
    <property type="entry name" value="Elongation factor G"/>
    <property type="match status" value="1"/>
</dbReference>
<dbReference type="FunFam" id="3.30.70.240:FF:000001">
    <property type="entry name" value="Elongation factor G"/>
    <property type="match status" value="1"/>
</dbReference>
<dbReference type="FunFam" id="3.30.70.870:FF:000001">
    <property type="entry name" value="Elongation factor G"/>
    <property type="match status" value="1"/>
</dbReference>
<dbReference type="FunFam" id="3.40.50.300:FF:000029">
    <property type="entry name" value="Elongation factor G"/>
    <property type="match status" value="1"/>
</dbReference>
<dbReference type="Gene3D" id="3.30.230.10">
    <property type="match status" value="1"/>
</dbReference>
<dbReference type="Gene3D" id="3.30.70.240">
    <property type="match status" value="1"/>
</dbReference>
<dbReference type="Gene3D" id="3.30.70.870">
    <property type="entry name" value="Elongation Factor G (Translational Gtpase), domain 3"/>
    <property type="match status" value="1"/>
</dbReference>
<dbReference type="Gene3D" id="3.40.50.300">
    <property type="entry name" value="P-loop containing nucleotide triphosphate hydrolases"/>
    <property type="match status" value="1"/>
</dbReference>
<dbReference type="Gene3D" id="2.40.30.10">
    <property type="entry name" value="Translation factors"/>
    <property type="match status" value="1"/>
</dbReference>
<dbReference type="HAMAP" id="MF_00054_B">
    <property type="entry name" value="EF_G_EF_2_B"/>
    <property type="match status" value="1"/>
</dbReference>
<dbReference type="InterPro" id="IPR053905">
    <property type="entry name" value="EF-G-like_DII"/>
</dbReference>
<dbReference type="InterPro" id="IPR041095">
    <property type="entry name" value="EFG_II"/>
</dbReference>
<dbReference type="InterPro" id="IPR009022">
    <property type="entry name" value="EFG_III"/>
</dbReference>
<dbReference type="InterPro" id="IPR035647">
    <property type="entry name" value="EFG_III/V"/>
</dbReference>
<dbReference type="InterPro" id="IPR047872">
    <property type="entry name" value="EFG_IV"/>
</dbReference>
<dbReference type="InterPro" id="IPR035649">
    <property type="entry name" value="EFG_V"/>
</dbReference>
<dbReference type="InterPro" id="IPR000640">
    <property type="entry name" value="EFG_V-like"/>
</dbReference>
<dbReference type="InterPro" id="IPR031157">
    <property type="entry name" value="G_TR_CS"/>
</dbReference>
<dbReference type="InterPro" id="IPR027417">
    <property type="entry name" value="P-loop_NTPase"/>
</dbReference>
<dbReference type="InterPro" id="IPR020568">
    <property type="entry name" value="Ribosomal_Su5_D2-typ_SF"/>
</dbReference>
<dbReference type="InterPro" id="IPR014721">
    <property type="entry name" value="Ribsml_uS5_D2-typ_fold_subgr"/>
</dbReference>
<dbReference type="InterPro" id="IPR005225">
    <property type="entry name" value="Small_GTP-bd"/>
</dbReference>
<dbReference type="InterPro" id="IPR000795">
    <property type="entry name" value="T_Tr_GTP-bd_dom"/>
</dbReference>
<dbReference type="InterPro" id="IPR009000">
    <property type="entry name" value="Transl_B-barrel_sf"/>
</dbReference>
<dbReference type="InterPro" id="IPR004540">
    <property type="entry name" value="Transl_elong_EFG/EF2"/>
</dbReference>
<dbReference type="InterPro" id="IPR005517">
    <property type="entry name" value="Transl_elong_EFG/EF2_IV"/>
</dbReference>
<dbReference type="NCBIfam" id="TIGR00484">
    <property type="entry name" value="EF-G"/>
    <property type="match status" value="1"/>
</dbReference>
<dbReference type="NCBIfam" id="NF009381">
    <property type="entry name" value="PRK12740.1-5"/>
    <property type="match status" value="1"/>
</dbReference>
<dbReference type="NCBIfam" id="TIGR00231">
    <property type="entry name" value="small_GTP"/>
    <property type="match status" value="1"/>
</dbReference>
<dbReference type="PANTHER" id="PTHR43261:SF1">
    <property type="entry name" value="RIBOSOME-RELEASING FACTOR 2, MITOCHONDRIAL"/>
    <property type="match status" value="1"/>
</dbReference>
<dbReference type="PANTHER" id="PTHR43261">
    <property type="entry name" value="TRANSLATION ELONGATION FACTOR G-RELATED"/>
    <property type="match status" value="1"/>
</dbReference>
<dbReference type="Pfam" id="PF22042">
    <property type="entry name" value="EF-G_D2"/>
    <property type="match status" value="1"/>
</dbReference>
<dbReference type="Pfam" id="PF00679">
    <property type="entry name" value="EFG_C"/>
    <property type="match status" value="1"/>
</dbReference>
<dbReference type="Pfam" id="PF14492">
    <property type="entry name" value="EFG_III"/>
    <property type="match status" value="1"/>
</dbReference>
<dbReference type="Pfam" id="PF03764">
    <property type="entry name" value="EFG_IV"/>
    <property type="match status" value="1"/>
</dbReference>
<dbReference type="Pfam" id="PF00009">
    <property type="entry name" value="GTP_EFTU"/>
    <property type="match status" value="1"/>
</dbReference>
<dbReference type="PRINTS" id="PR00315">
    <property type="entry name" value="ELONGATNFCT"/>
</dbReference>
<dbReference type="SMART" id="SM00838">
    <property type="entry name" value="EFG_C"/>
    <property type="match status" value="1"/>
</dbReference>
<dbReference type="SMART" id="SM00889">
    <property type="entry name" value="EFG_IV"/>
    <property type="match status" value="1"/>
</dbReference>
<dbReference type="SUPFAM" id="SSF54980">
    <property type="entry name" value="EF-G C-terminal domain-like"/>
    <property type="match status" value="2"/>
</dbReference>
<dbReference type="SUPFAM" id="SSF52540">
    <property type="entry name" value="P-loop containing nucleoside triphosphate hydrolases"/>
    <property type="match status" value="1"/>
</dbReference>
<dbReference type="SUPFAM" id="SSF54211">
    <property type="entry name" value="Ribosomal protein S5 domain 2-like"/>
    <property type="match status" value="1"/>
</dbReference>
<dbReference type="SUPFAM" id="SSF50447">
    <property type="entry name" value="Translation proteins"/>
    <property type="match status" value="1"/>
</dbReference>
<dbReference type="PROSITE" id="PS00301">
    <property type="entry name" value="G_TR_1"/>
    <property type="match status" value="1"/>
</dbReference>
<dbReference type="PROSITE" id="PS51722">
    <property type="entry name" value="G_TR_2"/>
    <property type="match status" value="1"/>
</dbReference>
<gene>
    <name evidence="1" type="primary">fusA</name>
    <name type="ordered locus">A1C_00975</name>
</gene>
<reference key="1">
    <citation type="submission" date="2007-09" db="EMBL/GenBank/DDBJ databases">
        <title>Complete genome sequence of Rickettsia akari.</title>
        <authorList>
            <person name="Madan A."/>
            <person name="Fahey J."/>
            <person name="Helton E."/>
            <person name="Ketteman M."/>
            <person name="Madan A."/>
            <person name="Rodrigues S."/>
            <person name="Sanchez A."/>
            <person name="Whiting M."/>
            <person name="Dasch G."/>
            <person name="Eremeeva M."/>
        </authorList>
    </citation>
    <scope>NUCLEOTIDE SEQUENCE [LARGE SCALE GENOMIC DNA]</scope>
    <source>
        <strain>Hartford</strain>
    </source>
</reference>
<proteinExistence type="inferred from homology"/>
<feature type="chain" id="PRO_1000008874" description="Elongation factor G">
    <location>
        <begin position="1"/>
        <end position="699"/>
    </location>
</feature>
<feature type="domain" description="tr-type G">
    <location>
        <begin position="8"/>
        <end position="283"/>
    </location>
</feature>
<feature type="binding site" evidence="1">
    <location>
        <begin position="17"/>
        <end position="24"/>
    </location>
    <ligand>
        <name>GTP</name>
        <dbReference type="ChEBI" id="CHEBI:37565"/>
    </ligand>
</feature>
<feature type="binding site" evidence="1">
    <location>
        <begin position="81"/>
        <end position="85"/>
    </location>
    <ligand>
        <name>GTP</name>
        <dbReference type="ChEBI" id="CHEBI:37565"/>
    </ligand>
</feature>
<feature type="binding site" evidence="1">
    <location>
        <begin position="135"/>
        <end position="138"/>
    </location>
    <ligand>
        <name>GTP</name>
        <dbReference type="ChEBI" id="CHEBI:37565"/>
    </ligand>
</feature>
<name>EFG_RICAH</name>
<evidence type="ECO:0000255" key="1">
    <source>
        <dbReference type="HAMAP-Rule" id="MF_00054"/>
    </source>
</evidence>
<keyword id="KW-0963">Cytoplasm</keyword>
<keyword id="KW-0251">Elongation factor</keyword>
<keyword id="KW-0342">GTP-binding</keyword>
<keyword id="KW-0547">Nucleotide-binding</keyword>
<keyword id="KW-0648">Protein biosynthesis</keyword>
<accession>A8GMA0</accession>
<sequence length="699" mass="77568">MSKMNKLEHIRNIGICAHIDAGKTTTTERILYYTGKSHKIGEVHDGGATMDWMEQEQERGITITSAATTCRWQDKIINIIDTPGHVDFTIEVERSLRVLDGAVAVFDGVAGVEPQSETVWRQADKYNVPRMCFVNKMDRMGADFYRCVEMIKDRLGAKPLVLQLPVGIEENFKGIIDLVKMKAVIWKDESLGAEYCEEDIPADMKDKAEEYRAKLLDMVVELDDTIMEKYLSGEEVTEEEIKRLIRKGTISAAFYPVLCGSAFKNKGVQPLLDAVVYFLPSPIDIGIVKGIEVSTGEEKDFPVSVIEPFAALAFKIMNDPFVGSLTFIRIYSGKIASGITVINTVKNKKEKIGRMLLMHANNREDVKEASAGDIVALAGLKDTTTGDTLSDVDKQVILERMEFPEPVIELAVEPKSTADQEKMGLALSRLAAEDPSFRVSMDHETGQTVIKGMGELHLEIIIDRMRREFKVEANIGAPQVAYRETITKACEIDYTHKKQSGGAGQFARVKIIFEPLKEVKDLEDEDKNKTFVFASKIVGGAVPKEYIPGVEKGLNNIRETGVIAGYPMIDFKATLVDGAFHDVDSSVLAFEIAAKAAFREGMPKGDPKLLEPIMKVEVITPDEYMGDIIGDLNSRRGQIQSMDPRGNAQVVTANVPLAEMFGYVNTLRSLSQGRAQFSMIFSHYDQVPSQVADIIKAKK</sequence>
<comment type="function">
    <text evidence="1">Catalyzes the GTP-dependent ribosomal translocation step during translation elongation. During this step, the ribosome changes from the pre-translocational (PRE) to the post-translocational (POST) state as the newly formed A-site-bound peptidyl-tRNA and P-site-bound deacylated tRNA move to the P and E sites, respectively. Catalyzes the coordinated movement of the two tRNA molecules, the mRNA and conformational changes in the ribosome.</text>
</comment>
<comment type="subcellular location">
    <subcellularLocation>
        <location evidence="1">Cytoplasm</location>
    </subcellularLocation>
</comment>
<comment type="similarity">
    <text evidence="1">Belongs to the TRAFAC class translation factor GTPase superfamily. Classic translation factor GTPase family. EF-G/EF-2 subfamily.</text>
</comment>
<protein>
    <recommendedName>
        <fullName evidence="1">Elongation factor G</fullName>
        <shortName evidence="1">EF-G</shortName>
    </recommendedName>
</protein>
<organism>
    <name type="scientific">Rickettsia akari (strain Hartford)</name>
    <dbReference type="NCBI Taxonomy" id="293614"/>
    <lineage>
        <taxon>Bacteria</taxon>
        <taxon>Pseudomonadati</taxon>
        <taxon>Pseudomonadota</taxon>
        <taxon>Alphaproteobacteria</taxon>
        <taxon>Rickettsiales</taxon>
        <taxon>Rickettsiaceae</taxon>
        <taxon>Rickettsieae</taxon>
        <taxon>Rickettsia</taxon>
        <taxon>spotted fever group</taxon>
    </lineage>
</organism>